<dbReference type="EC" id="4.1.2.19" evidence="1"/>
<dbReference type="EMBL" id="FM180568">
    <property type="protein sequence ID" value="CAS11755.1"/>
    <property type="molecule type" value="Genomic_DNA"/>
</dbReference>
<dbReference type="RefSeq" id="WP_001179755.1">
    <property type="nucleotide sequence ID" value="NC_011601.1"/>
</dbReference>
<dbReference type="SMR" id="B7UNM3"/>
<dbReference type="KEGG" id="ecg:E2348C_4207"/>
<dbReference type="HOGENOM" id="CLU_076831_0_0_6"/>
<dbReference type="UniPathway" id="UPA00541">
    <property type="reaction ID" value="UER00603"/>
</dbReference>
<dbReference type="Proteomes" id="UP000008205">
    <property type="component" value="Chromosome"/>
</dbReference>
<dbReference type="GO" id="GO:0005829">
    <property type="term" value="C:cytosol"/>
    <property type="evidence" value="ECO:0007669"/>
    <property type="project" value="TreeGrafter"/>
</dbReference>
<dbReference type="GO" id="GO:0046872">
    <property type="term" value="F:metal ion binding"/>
    <property type="evidence" value="ECO:0007669"/>
    <property type="project" value="UniProtKB-KW"/>
</dbReference>
<dbReference type="GO" id="GO:0008994">
    <property type="term" value="F:rhamnulose-1-phosphate aldolase activity"/>
    <property type="evidence" value="ECO:0007669"/>
    <property type="project" value="UniProtKB-UniRule"/>
</dbReference>
<dbReference type="GO" id="GO:0019323">
    <property type="term" value="P:pentose catabolic process"/>
    <property type="evidence" value="ECO:0007669"/>
    <property type="project" value="TreeGrafter"/>
</dbReference>
<dbReference type="GO" id="GO:0019301">
    <property type="term" value="P:rhamnose catabolic process"/>
    <property type="evidence" value="ECO:0007669"/>
    <property type="project" value="UniProtKB-UniRule"/>
</dbReference>
<dbReference type="CDD" id="cd00398">
    <property type="entry name" value="Aldolase_II"/>
    <property type="match status" value="1"/>
</dbReference>
<dbReference type="FunFam" id="3.40.225.10:FF:000006">
    <property type="entry name" value="Rhamnulose-1-phosphate aldolase"/>
    <property type="match status" value="1"/>
</dbReference>
<dbReference type="Gene3D" id="3.40.225.10">
    <property type="entry name" value="Class II aldolase/adducin N-terminal domain"/>
    <property type="match status" value="1"/>
</dbReference>
<dbReference type="HAMAP" id="MF_00770">
    <property type="entry name" value="RhaD"/>
    <property type="match status" value="1"/>
</dbReference>
<dbReference type="InterPro" id="IPR050197">
    <property type="entry name" value="Aldolase_class_II_sugar_metab"/>
</dbReference>
<dbReference type="InterPro" id="IPR001303">
    <property type="entry name" value="Aldolase_II/adducin_N"/>
</dbReference>
<dbReference type="InterPro" id="IPR036409">
    <property type="entry name" value="Aldolase_II/adducin_N_sf"/>
</dbReference>
<dbReference type="InterPro" id="IPR013447">
    <property type="entry name" value="Rhamnulose-1-P_Aldolase"/>
</dbReference>
<dbReference type="NCBIfam" id="NF002963">
    <property type="entry name" value="PRK03634.1"/>
    <property type="match status" value="1"/>
</dbReference>
<dbReference type="NCBIfam" id="TIGR02624">
    <property type="entry name" value="rhamnu_1P_ald"/>
    <property type="match status" value="1"/>
</dbReference>
<dbReference type="PANTHER" id="PTHR22789">
    <property type="entry name" value="FUCULOSE PHOSPHATE ALDOLASE"/>
    <property type="match status" value="1"/>
</dbReference>
<dbReference type="PANTHER" id="PTHR22789:SF16">
    <property type="entry name" value="RHAMNULOSE-1-PHOSPHATE ALDOLASE"/>
    <property type="match status" value="1"/>
</dbReference>
<dbReference type="Pfam" id="PF00596">
    <property type="entry name" value="Aldolase_II"/>
    <property type="match status" value="1"/>
</dbReference>
<dbReference type="SMART" id="SM01007">
    <property type="entry name" value="Aldolase_II"/>
    <property type="match status" value="1"/>
</dbReference>
<dbReference type="SUPFAM" id="SSF53639">
    <property type="entry name" value="AraD/HMP-PK domain-like"/>
    <property type="match status" value="1"/>
</dbReference>
<keyword id="KW-0963">Cytoplasm</keyword>
<keyword id="KW-0456">Lyase</keyword>
<keyword id="KW-0479">Metal-binding</keyword>
<keyword id="KW-1185">Reference proteome</keyword>
<keyword id="KW-0684">Rhamnose metabolism</keyword>
<keyword id="KW-0862">Zinc</keyword>
<comment type="function">
    <text evidence="1">Catalyzes the reversible cleavage of L-rhamnulose-1-phosphate to dihydroxyacetone phosphate (DHAP) and L-lactaldehyde.</text>
</comment>
<comment type="catalytic activity">
    <reaction evidence="1">
        <text>L-rhamnulose 1-phosphate = (S)-lactaldehyde + dihydroxyacetone phosphate</text>
        <dbReference type="Rhea" id="RHEA:19689"/>
        <dbReference type="ChEBI" id="CHEBI:18041"/>
        <dbReference type="ChEBI" id="CHEBI:57642"/>
        <dbReference type="ChEBI" id="CHEBI:58313"/>
        <dbReference type="EC" id="4.1.2.19"/>
    </reaction>
</comment>
<comment type="cofactor">
    <cofactor evidence="1">
        <name>Zn(2+)</name>
        <dbReference type="ChEBI" id="CHEBI:29105"/>
    </cofactor>
    <text evidence="1">Binds 1 zinc ion per subunit.</text>
</comment>
<comment type="pathway">
    <text evidence="1">Carbohydrate degradation; L-rhamnose degradation; glycerone phosphate from L-rhamnose: step 3/3.</text>
</comment>
<comment type="subunit">
    <text evidence="1">Homotetramer.</text>
</comment>
<comment type="subcellular location">
    <subcellularLocation>
        <location evidence="1">Cytoplasm</location>
    </subcellularLocation>
</comment>
<comment type="similarity">
    <text evidence="1">Belongs to the aldolase class II family. RhaD subfamily.</text>
</comment>
<sequence>MQNITQSWFVQGMIKATTDAWLKGWDERNGGNLTLRLDDADIAPYHGNFHAQPRYIPLSQPMPLLANTPFIVTGSGKFFRNVQLDPAANLGVVKVDSDGAGYHILWGLTNEAVPTSELPAHFLSHCERIKATNGKDRVIMHCHATNLIALTYVLENDTAVFTRQLWEGSTECLVVFPDGVGILPWMVPGTDEIGQATAQEMQKHSLVLWPFHGVFGSGPTLDETFGLIDTAEKSAQVLVKVYSMGGMKQTISREELIALGQRFGVTPLASALAL</sequence>
<evidence type="ECO:0000255" key="1">
    <source>
        <dbReference type="HAMAP-Rule" id="MF_00770"/>
    </source>
</evidence>
<name>RHAD_ECO27</name>
<protein>
    <recommendedName>
        <fullName evidence="1">Rhamnulose-1-phosphate aldolase</fullName>
        <ecNumber evidence="1">4.1.2.19</ecNumber>
    </recommendedName>
</protein>
<reference key="1">
    <citation type="journal article" date="2009" name="J. Bacteriol.">
        <title>Complete genome sequence and comparative genome analysis of enteropathogenic Escherichia coli O127:H6 strain E2348/69.</title>
        <authorList>
            <person name="Iguchi A."/>
            <person name="Thomson N.R."/>
            <person name="Ogura Y."/>
            <person name="Saunders D."/>
            <person name="Ooka T."/>
            <person name="Henderson I.R."/>
            <person name="Harris D."/>
            <person name="Asadulghani M."/>
            <person name="Kurokawa K."/>
            <person name="Dean P."/>
            <person name="Kenny B."/>
            <person name="Quail M.A."/>
            <person name="Thurston S."/>
            <person name="Dougan G."/>
            <person name="Hayashi T."/>
            <person name="Parkhill J."/>
            <person name="Frankel G."/>
        </authorList>
    </citation>
    <scope>NUCLEOTIDE SEQUENCE [LARGE SCALE GENOMIC DNA]</scope>
    <source>
        <strain>E2348/69 / EPEC</strain>
    </source>
</reference>
<organism>
    <name type="scientific">Escherichia coli O127:H6 (strain E2348/69 / EPEC)</name>
    <dbReference type="NCBI Taxonomy" id="574521"/>
    <lineage>
        <taxon>Bacteria</taxon>
        <taxon>Pseudomonadati</taxon>
        <taxon>Pseudomonadota</taxon>
        <taxon>Gammaproteobacteria</taxon>
        <taxon>Enterobacterales</taxon>
        <taxon>Enterobacteriaceae</taxon>
        <taxon>Escherichia</taxon>
    </lineage>
</organism>
<gene>
    <name evidence="1" type="primary">rhaD</name>
    <name type="ordered locus">E2348C_4207</name>
</gene>
<proteinExistence type="inferred from homology"/>
<accession>B7UNM3</accession>
<feature type="chain" id="PRO_1000148448" description="Rhamnulose-1-phosphate aldolase">
    <location>
        <begin position="1"/>
        <end position="274"/>
    </location>
</feature>
<feature type="active site" evidence="1">
    <location>
        <position position="117"/>
    </location>
</feature>
<feature type="binding site" evidence="1">
    <location>
        <position position="141"/>
    </location>
    <ligand>
        <name>Zn(2+)</name>
        <dbReference type="ChEBI" id="CHEBI:29105"/>
    </ligand>
</feature>
<feature type="binding site" evidence="1">
    <location>
        <position position="143"/>
    </location>
    <ligand>
        <name>Zn(2+)</name>
        <dbReference type="ChEBI" id="CHEBI:29105"/>
    </ligand>
</feature>
<feature type="binding site" evidence="1">
    <location>
        <position position="212"/>
    </location>
    <ligand>
        <name>Zn(2+)</name>
        <dbReference type="ChEBI" id="CHEBI:29105"/>
    </ligand>
</feature>